<dbReference type="EMBL" id="AJ313032">
    <property type="protein sequence ID" value="CAC38360.1"/>
    <property type="molecule type" value="Genomic_DNA"/>
</dbReference>
<dbReference type="EMBL" id="AJ313034">
    <property type="protein sequence ID" value="CAC38363.1"/>
    <property type="molecule type" value="Genomic_DNA"/>
</dbReference>
<dbReference type="EMBL" id="AL513382">
    <property type="protein sequence ID" value="CAD01758.1"/>
    <property type="status" value="ALT_INIT"/>
    <property type="molecule type" value="Genomic_DNA"/>
</dbReference>
<dbReference type="EMBL" id="AE014613">
    <property type="protein sequence ID" value="AAO69115.1"/>
    <property type="status" value="ALT_INIT"/>
    <property type="molecule type" value="Genomic_DNA"/>
</dbReference>
<dbReference type="RefSeq" id="NP_455928.1">
    <property type="nucleotide sequence ID" value="NC_003198.1"/>
</dbReference>
<dbReference type="RefSeq" id="WP_001681583.1">
    <property type="nucleotide sequence ID" value="NZ_WSUR01000006.1"/>
</dbReference>
<dbReference type="SMR" id="Q8Z727"/>
<dbReference type="STRING" id="220341.gene:17585448"/>
<dbReference type="KEGG" id="stt:t1477"/>
<dbReference type="KEGG" id="sty:STY1498"/>
<dbReference type="PATRIC" id="fig|220341.7.peg.1508"/>
<dbReference type="eggNOG" id="ENOG502ZB9A">
    <property type="taxonomic scope" value="Bacteria"/>
</dbReference>
<dbReference type="HOGENOM" id="CLU_080941_0_0_6"/>
<dbReference type="OMA" id="QSCDTDF"/>
<dbReference type="OrthoDB" id="6629132at2"/>
<dbReference type="Proteomes" id="UP000000541">
    <property type="component" value="Chromosome"/>
</dbReference>
<dbReference type="Proteomes" id="UP000002670">
    <property type="component" value="Chromosome"/>
</dbReference>
<dbReference type="GO" id="GO:0005576">
    <property type="term" value="C:extracellular region"/>
    <property type="evidence" value="ECO:0007669"/>
    <property type="project" value="UniProtKB-SubCell"/>
</dbReference>
<dbReference type="GO" id="GO:0020002">
    <property type="term" value="C:host cell plasma membrane"/>
    <property type="evidence" value="ECO:0007669"/>
    <property type="project" value="UniProtKB-SubCell"/>
</dbReference>
<dbReference type="GO" id="GO:0016020">
    <property type="term" value="C:membrane"/>
    <property type="evidence" value="ECO:0007669"/>
    <property type="project" value="UniProtKB-KW"/>
</dbReference>
<dbReference type="GO" id="GO:0042597">
    <property type="term" value="C:periplasmic space"/>
    <property type="evidence" value="ECO:0007669"/>
    <property type="project" value="UniProtKB-SubCell"/>
</dbReference>
<dbReference type="GO" id="GO:0140911">
    <property type="term" value="F:pore-forming activity"/>
    <property type="evidence" value="ECO:0000314"/>
    <property type="project" value="GO_Central"/>
</dbReference>
<dbReference type="GO" id="GO:0090729">
    <property type="term" value="F:toxin activity"/>
    <property type="evidence" value="ECO:0007669"/>
    <property type="project" value="UniProtKB-KW"/>
</dbReference>
<dbReference type="GO" id="GO:0044179">
    <property type="term" value="P:hemolysis in another organism"/>
    <property type="evidence" value="ECO:0007669"/>
    <property type="project" value="InterPro"/>
</dbReference>
<dbReference type="GO" id="GO:0019836">
    <property type="term" value="P:symbiont-mediated hemolysis of host erythrocyte"/>
    <property type="evidence" value="ECO:0000315"/>
    <property type="project" value="CACAO"/>
</dbReference>
<dbReference type="CDD" id="cd22651">
    <property type="entry name" value="HlyE-like"/>
    <property type="match status" value="1"/>
</dbReference>
<dbReference type="Gene3D" id="1.20.1170.10">
    <property type="match status" value="1"/>
</dbReference>
<dbReference type="InterPro" id="IPR027018">
    <property type="entry name" value="Hemolysin_E"/>
</dbReference>
<dbReference type="NCBIfam" id="NF008477">
    <property type="entry name" value="PRK11376.1"/>
    <property type="match status" value="1"/>
</dbReference>
<dbReference type="Pfam" id="PF06109">
    <property type="entry name" value="HlyE"/>
    <property type="match status" value="1"/>
</dbReference>
<dbReference type="SUPFAM" id="SSF58100">
    <property type="entry name" value="Bacterial hemolysins"/>
    <property type="match status" value="1"/>
</dbReference>
<reference key="1">
    <citation type="journal article" date="2002" name="Infect. Immun.">
        <title>Characterization of a pore-forming cytotoxin expressed by Salmonella enterica serovars typhi and paratyphi A.</title>
        <authorList>
            <person name="Oscarsson J."/>
            <person name="Westermark M."/>
            <person name="Loefdahl S."/>
            <person name="Olsen B."/>
            <person name="Palmgren H."/>
            <person name="Mizunoe Y."/>
            <person name="Wai S.N."/>
            <person name="Uhlin B.E."/>
        </authorList>
    </citation>
    <scope>NUCLEOTIDE SEQUENCE [GENOMIC DNA]</scope>
    <source>
        <strain>SMI S2369/96</strain>
        <strain>Ty21a</strain>
    </source>
</reference>
<reference key="2">
    <citation type="journal article" date="2001" name="Nature">
        <title>Complete genome sequence of a multiple drug resistant Salmonella enterica serovar Typhi CT18.</title>
        <authorList>
            <person name="Parkhill J."/>
            <person name="Dougan G."/>
            <person name="James K.D."/>
            <person name="Thomson N.R."/>
            <person name="Pickard D."/>
            <person name="Wain J."/>
            <person name="Churcher C.M."/>
            <person name="Mungall K.L."/>
            <person name="Bentley S.D."/>
            <person name="Holden M.T.G."/>
            <person name="Sebaihia M."/>
            <person name="Baker S."/>
            <person name="Basham D."/>
            <person name="Brooks K."/>
            <person name="Chillingworth T."/>
            <person name="Connerton P."/>
            <person name="Cronin A."/>
            <person name="Davis P."/>
            <person name="Davies R.M."/>
            <person name="Dowd L."/>
            <person name="White N."/>
            <person name="Farrar J."/>
            <person name="Feltwell T."/>
            <person name="Hamlin N."/>
            <person name="Haque A."/>
            <person name="Hien T.T."/>
            <person name="Holroyd S."/>
            <person name="Jagels K."/>
            <person name="Krogh A."/>
            <person name="Larsen T.S."/>
            <person name="Leather S."/>
            <person name="Moule S."/>
            <person name="O'Gaora P."/>
            <person name="Parry C."/>
            <person name="Quail M.A."/>
            <person name="Rutherford K.M."/>
            <person name="Simmonds M."/>
            <person name="Skelton J."/>
            <person name="Stevens K."/>
            <person name="Whitehead S."/>
            <person name="Barrell B.G."/>
        </authorList>
    </citation>
    <scope>NUCLEOTIDE SEQUENCE [LARGE SCALE GENOMIC DNA]</scope>
    <source>
        <strain>CT18</strain>
    </source>
</reference>
<reference key="3">
    <citation type="journal article" date="2003" name="J. Bacteriol.">
        <title>Comparative genomics of Salmonella enterica serovar Typhi strains Ty2 and CT18.</title>
        <authorList>
            <person name="Deng W."/>
            <person name="Liou S.-R."/>
            <person name="Plunkett G. III"/>
            <person name="Mayhew G.F."/>
            <person name="Rose D.J."/>
            <person name="Burland V."/>
            <person name="Kodoyianni V."/>
            <person name="Schwartz D.C."/>
            <person name="Blattner F.R."/>
        </authorList>
    </citation>
    <scope>NUCLEOTIDE SEQUENCE [LARGE SCALE GENOMIC DNA]</scope>
    <source>
        <strain>ATCC 700931 / Ty2</strain>
    </source>
</reference>
<protein>
    <recommendedName>
        <fullName>Hemolysin E</fullName>
    </recommendedName>
    <alternativeName>
        <fullName>Cytotoxin ClyA</fullName>
    </alternativeName>
    <alternativeName>
        <fullName>Silent hemolysin SheA</fullName>
    </alternativeName>
</protein>
<feature type="initiator methionine" description="Removed" evidence="1">
    <location>
        <position position="1"/>
    </location>
</feature>
<feature type="chain" id="PRO_0000083998" description="Hemolysin E">
    <location>
        <begin position="2"/>
        <end position="303"/>
    </location>
</feature>
<feature type="transmembrane region" description="Helical" evidence="2">
    <location>
        <begin position="179"/>
        <end position="199"/>
    </location>
</feature>
<feature type="disulfide bond" description="In monomeric form" evidence="1">
    <location>
        <begin position="87"/>
        <end position="285"/>
    </location>
</feature>
<proteinExistence type="inferred from homology"/>
<accession>Q8Z727</accession>
<accession>Q934C4</accession>
<gene>
    <name type="primary">hlyE</name>
    <name type="synonym">clyA</name>
    <name type="synonym">sheA</name>
    <name type="ordered locus">STY1498</name>
    <name type="ordered locus">t1477</name>
</gene>
<evidence type="ECO:0000250" key="1"/>
<evidence type="ECO:0000255" key="2"/>
<evidence type="ECO:0000305" key="3"/>
<comment type="function">
    <text evidence="1">Toxin, which has some hemolytic activity towards mammalian cells. Acts by forming a pore-like structure upon contact with mammalian cells (By similarity).</text>
</comment>
<comment type="subunit">
    <text evidence="1">Monomer and oligomer. In periplasm, it is present as a monomer, while in outer membrane vesicles, it oligomerizes to form a pore structure that is active. The pore is formed by a dodecamer (By similarity).</text>
</comment>
<comment type="subcellular location">
    <subcellularLocation>
        <location evidence="1">Secreted</location>
    </subcellularLocation>
    <subcellularLocation>
        <location evidence="1">Periplasm</location>
    </subcellularLocation>
    <subcellularLocation>
        <location evidence="3">Host cell membrane</location>
        <topology evidence="3">Single-pass membrane protein</topology>
    </subcellularLocation>
    <text evidence="1">Exported from the cell by outer membrane vesicles. Also found in the periplasmic space (By similarity).</text>
</comment>
<comment type="PTM">
    <text evidence="1">In periplasm, it forms a disulfide bond, which prevents the oligomerization. In outer membrane vesicles, the redox status prevents formation of the disulfide bond, leading to oligomerization and pore formation (By similarity).</text>
</comment>
<comment type="similarity">
    <text evidence="3">Belongs to the hemolysin E family.</text>
</comment>
<comment type="sequence caution" evidence="3">
    <conflict type="erroneous initiation">
        <sequence resource="EMBL-CDS" id="AAO69115"/>
    </conflict>
</comment>
<comment type="sequence caution" evidence="3">
    <conflict type="erroneous initiation">
        <sequence resource="EMBL-CDS" id="CAD01758"/>
    </conflict>
</comment>
<name>HLYE_SALTI</name>
<sequence length="303" mass="33790">MTGIFAEQTVEVVKSAIETADGALDLYNKYLDQVIPWKTFDETIKELSRFKQEYSQEASVLVGDIKVLLMDSQDKYFEATQTVYEWCGVVTQLLSAYILLFDEYNEKKASAQKDILIRILDDGVKKLNEAQKSLLTSSQSFNNASGKLLALDSQLTNDFSEKSSYFQSQVDRIRKEAYAGAAAGIVAGPFGLIISYSIAAGVIEGKLIPELNNRLKTVQNFFTSLSATVKQANKDIDAAKLKLATEIAAIGEIKTETETTRFYVDYDDLMLSLLKGAAKKMINTCNEYQQRHGKKTLFEVPDV</sequence>
<organism>
    <name type="scientific">Salmonella typhi</name>
    <dbReference type="NCBI Taxonomy" id="90370"/>
    <lineage>
        <taxon>Bacteria</taxon>
        <taxon>Pseudomonadati</taxon>
        <taxon>Pseudomonadota</taxon>
        <taxon>Gammaproteobacteria</taxon>
        <taxon>Enterobacterales</taxon>
        <taxon>Enterobacteriaceae</taxon>
        <taxon>Salmonella</taxon>
    </lineage>
</organism>
<keyword id="KW-0204">Cytolysis</keyword>
<keyword id="KW-1015">Disulfide bond</keyword>
<keyword id="KW-0354">Hemolysis</keyword>
<keyword id="KW-1032">Host cell membrane</keyword>
<keyword id="KW-1043">Host membrane</keyword>
<keyword id="KW-0472">Membrane</keyword>
<keyword id="KW-0574">Periplasm</keyword>
<keyword id="KW-0964">Secreted</keyword>
<keyword id="KW-0800">Toxin</keyword>
<keyword id="KW-0812">Transmembrane</keyword>
<keyword id="KW-1133">Transmembrane helix</keyword>
<keyword id="KW-0843">Virulence</keyword>